<accession>C0HM89</accession>
<keyword id="KW-0903">Direct protein sequencing</keyword>
<organism evidence="2">
    <name type="scientific">Epinephelus costae</name>
    <name type="common">Goldblotch grouper</name>
    <name type="synonym">Serranus costae</name>
    <dbReference type="NCBI Taxonomy" id="309632"/>
    <lineage>
        <taxon>Eukaryota</taxon>
        <taxon>Metazoa</taxon>
        <taxon>Chordata</taxon>
        <taxon>Craniata</taxon>
        <taxon>Vertebrata</taxon>
        <taxon>Euteleostomi</taxon>
        <taxon>Actinopterygii</taxon>
        <taxon>Neopterygii</taxon>
        <taxon>Teleostei</taxon>
        <taxon>Neoteleostei</taxon>
        <taxon>Acanthomorphata</taxon>
        <taxon>Eupercaria</taxon>
        <taxon>Perciformes</taxon>
        <taxon>Serranoidei</taxon>
        <taxon>Serranidae</taxon>
        <taxon>Epinephelinae</taxon>
        <taxon>Epinephelini</taxon>
        <taxon>Epinephelus</taxon>
    </lineage>
</organism>
<evidence type="ECO:0000256" key="1">
    <source>
        <dbReference type="SAM" id="MobiDB-lite"/>
    </source>
</evidence>
<evidence type="ECO:0000303" key="2">
    <source ref="1"/>
</evidence>
<evidence type="ECO:0000305" key="3"/>
<comment type="similarity">
    <text evidence="3">Belongs to the fibrillar collagen family.</text>
</comment>
<protein>
    <recommendedName>
        <fullName evidence="3">Collagen, type I, alpha 1b</fullName>
        <shortName evidence="3">col1a1b</shortName>
    </recommendedName>
    <alternativeName>
        <fullName evidence="3">Alpha-1 type I collagen</fullName>
    </alternativeName>
</protein>
<name>CO1AB_EPICS</name>
<sequence>QMSYVDHSKSSGPPQPGPMGPMGPRGPPGPPGSSGPQGFTGPPGEPGEPGASGAMGSRGPSGPPGKNGDDGEPGKGAAGPQGARGFSGLDGAKGDAGPAGPKGESGAPGENGVPGVMGARGRPGPPGPSGARGNDGNTGPXGPPGPTGGETGPAGGRGNEGPQGARGEPGNPGPAGPAGPAGSPGTDGGPGAKGSPGAAGLAGAPGFPGGPAGAQGAVGAPGPKGNSGDPGASGPKGEPGAKGEPGPAGVQGLPGPSGEEGKRGARGEPGGAGPRGPPGERGFPGADGGAGGKGAPGERGAPGSLGAQGATGESGSPGAPGAPGSKGVTGSPGSPGPDGKTGPAGVAGQDGRPGPPGSAGARGQPGVMGFPGPKGPAGESGKPGERDGDVGAPGPSGVAGPAGEKGDRGFPGERGAPGLGGPTGARGAPGPAGNDGAKGEPGAAGAPGGLGAPGMQGMPGERGASGLPGAKGERGDAGGKGGDGAPGKDGSRGMTGALGVPGPPGAQGEKVAGPTGPRGETGPPGPAGFAGPPGADGQPGAKGETGDSGPKGDAGPQGPAGPTGPKGGAGPPGATGFPGPAGRVGPPGPAGAAGPPGPVGPVGKGETGXAGRPGPQGLAGQRGLVGLPGQRGERGFSGLPGPSGEPGKQGASGPVGERGPPGPSGPPGLSGATGEAGREGSQGHDGAPGRDGSAGPKGDRGESGMAGPPGPPGAPGAPGAVGPSGKSGDRGETGPAGPAGPSGPAGVRGPAGPAGAKGDRGEAGEAGDRGHKGFTGMQGLPGPAGVHGERGPAGASGPAGPRGPAGSNGAPGKDNGEMGPAGPPGPPGPAGPPGPPGSGFDFVSQPLQEKAPDPFRGGHYLRSPDGTQKKALLLGGSNDVELR</sequence>
<dbReference type="Gene3D" id="1.20.5.320">
    <property type="entry name" value="6-Phosphogluconate Dehydrogenase, domain 3"/>
    <property type="match status" value="1"/>
</dbReference>
<dbReference type="InterPro" id="IPR008160">
    <property type="entry name" value="Collagen"/>
</dbReference>
<dbReference type="InterPro" id="IPR050938">
    <property type="entry name" value="Collagen_Structural_Proteins"/>
</dbReference>
<dbReference type="PANTHER" id="PTHR37456:SF5">
    <property type="entry name" value="COLLAGEN TYPE XIII ALPHA 1 CHAIN"/>
    <property type="match status" value="1"/>
</dbReference>
<dbReference type="PANTHER" id="PTHR37456">
    <property type="entry name" value="SI:CH211-266K2.1"/>
    <property type="match status" value="1"/>
</dbReference>
<dbReference type="Pfam" id="PF01391">
    <property type="entry name" value="Collagen"/>
    <property type="match status" value="5"/>
</dbReference>
<reference evidence="3" key="1">
    <citation type="submission" date="2023-05" db="UniProtKB">
        <title>Grouping groupers in the Mediterranean: ecological baselines revealed by ancient proteins.</title>
        <authorList>
            <person name="Winter R.M."/>
            <person name="de Kock W."/>
            <person name="Mackie M."/>
            <person name="Ramsoe M."/>
            <person name="Desidera E."/>
            <person name="Collins M."/>
            <person name="Guidetti P."/>
            <person name="Presslee S."/>
            <person name="Munoz-Alegre M."/>
            <person name="Oueslati T."/>
            <person name="Morales-Muniz A."/>
            <person name="Michailidis D."/>
            <person name="van den Hurk Y."/>
            <person name="Taurozzi A.J."/>
            <person name="Cakirlar C."/>
        </authorList>
    </citation>
    <scope>PROTEIN SEQUENCE</scope>
    <scope>IDENTIFICATION BY MASS SPECTROMETRY</scope>
    <source>
        <tissue evidence="2">Bone</tissue>
    </source>
</reference>
<proteinExistence type="evidence at protein level"/>
<feature type="chain" id="PRO_0000459603" description="Collagen, type I, alpha 1b">
    <location>
        <begin position="1"/>
        <end position="883"/>
    </location>
</feature>
<feature type="region of interest" description="Disordered" evidence="1">
    <location>
        <begin position="1"/>
        <end position="883"/>
    </location>
</feature>
<feature type="compositionally biased region" description="Pro residues" evidence="1">
    <location>
        <begin position="13"/>
        <end position="33"/>
    </location>
</feature>
<feature type="compositionally biased region" description="Low complexity" evidence="1">
    <location>
        <begin position="34"/>
        <end position="57"/>
    </location>
</feature>
<feature type="compositionally biased region" description="Low complexity" evidence="1">
    <location>
        <begin position="113"/>
        <end position="122"/>
    </location>
</feature>
<feature type="compositionally biased region" description="Low complexity" evidence="1">
    <location>
        <begin position="129"/>
        <end position="140"/>
    </location>
</feature>
<feature type="compositionally biased region" description="Gly residues" evidence="1">
    <location>
        <begin position="147"/>
        <end position="161"/>
    </location>
</feature>
<feature type="compositionally biased region" description="Gly residues" evidence="1">
    <location>
        <begin position="185"/>
        <end position="194"/>
    </location>
</feature>
<feature type="compositionally biased region" description="Low complexity" evidence="1">
    <location>
        <begin position="195"/>
        <end position="205"/>
    </location>
</feature>
<feature type="compositionally biased region" description="Low complexity" evidence="1">
    <location>
        <begin position="214"/>
        <end position="223"/>
    </location>
</feature>
<feature type="compositionally biased region" description="Low complexity" evidence="1">
    <location>
        <begin position="230"/>
        <end position="248"/>
    </location>
</feature>
<feature type="compositionally biased region" description="Gly residues" evidence="1">
    <location>
        <begin position="285"/>
        <end position="297"/>
    </location>
</feature>
<feature type="compositionally biased region" description="Low complexity" evidence="1">
    <location>
        <begin position="310"/>
        <end position="326"/>
    </location>
</feature>
<feature type="compositionally biased region" description="Low complexity" evidence="1">
    <location>
        <begin position="390"/>
        <end position="402"/>
    </location>
</feature>
<feature type="compositionally biased region" description="Gly residues" evidence="1">
    <location>
        <begin position="415"/>
        <end position="424"/>
    </location>
</feature>
<feature type="compositionally biased region" description="Low complexity" evidence="1">
    <location>
        <begin position="425"/>
        <end position="444"/>
    </location>
</feature>
<feature type="compositionally biased region" description="Gly residues" evidence="1">
    <location>
        <begin position="445"/>
        <end position="454"/>
    </location>
</feature>
<feature type="compositionally biased region" description="Gly residues" evidence="1">
    <location>
        <begin position="478"/>
        <end position="487"/>
    </location>
</feature>
<feature type="compositionally biased region" description="Low complexity" evidence="1">
    <location>
        <begin position="512"/>
        <end position="542"/>
    </location>
</feature>
<feature type="compositionally biased region" description="Gly residues" evidence="1">
    <location>
        <begin position="564"/>
        <end position="573"/>
    </location>
</feature>
<feature type="compositionally biased region" description="Low complexity" evidence="1">
    <location>
        <begin position="574"/>
        <end position="584"/>
    </location>
</feature>
<feature type="compositionally biased region" description="Low complexity" evidence="1">
    <location>
        <begin position="717"/>
        <end position="726"/>
    </location>
</feature>
<feature type="compositionally biased region" description="Low complexity" evidence="1">
    <location>
        <begin position="742"/>
        <end position="756"/>
    </location>
</feature>
<feature type="compositionally biased region" description="Basic and acidic residues" evidence="1">
    <location>
        <begin position="757"/>
        <end position="771"/>
    </location>
</feature>
<feature type="compositionally biased region" description="Low complexity" evidence="1">
    <location>
        <begin position="792"/>
        <end position="812"/>
    </location>
</feature>
<feature type="compositionally biased region" description="Pro residues" evidence="1">
    <location>
        <begin position="821"/>
        <end position="836"/>
    </location>
</feature>
<feature type="non-consecutive residues" evidence="2">
    <location>
        <begin position="75"/>
        <end position="76"/>
    </location>
</feature>
<feature type="non-consecutive residues" evidence="2">
    <location>
        <begin position="120"/>
        <end position="121"/>
    </location>
</feature>
<feature type="non-consecutive residues" evidence="2">
    <location>
        <begin position="148"/>
        <end position="149"/>
    </location>
</feature>
<feature type="non-consecutive residues" evidence="2">
    <location>
        <begin position="209"/>
        <end position="210"/>
    </location>
</feature>
<feature type="non-consecutive residues" evidence="2">
    <location>
        <begin position="281"/>
        <end position="282"/>
    </location>
</feature>
<feature type="non-consecutive residues" evidence="2">
    <location>
        <begin position="386"/>
        <end position="387"/>
    </location>
</feature>
<feature type="non-consecutive residues" evidence="2">
    <location>
        <begin position="405"/>
        <end position="406"/>
    </location>
</feature>
<feature type="non-consecutive residues" evidence="2">
    <location>
        <begin position="510"/>
        <end position="511"/>
    </location>
</feature>
<feature type="non-consecutive residues" evidence="2">
    <location>
        <begin position="518"/>
        <end position="519"/>
    </location>
</feature>
<feature type="non-consecutive residues" evidence="2">
    <location>
        <begin position="555"/>
        <end position="556"/>
    </location>
</feature>
<feature type="non-consecutive residues" evidence="2">
    <location>
        <begin position="566"/>
        <end position="567"/>
    </location>
</feature>
<feature type="non-consecutive residues" evidence="2">
    <location>
        <begin position="604"/>
        <end position="605"/>
    </location>
</feature>
<feature type="non-consecutive residues" evidence="2">
    <location>
        <begin position="613"/>
        <end position="614"/>
    </location>
</feature>
<feature type="non-consecutive residues" evidence="2">
    <location>
        <begin position="772"/>
        <end position="773"/>
    </location>
</feature>
<feature type="non-consecutive residues" evidence="2">
    <location>
        <begin position="814"/>
        <end position="815"/>
    </location>
</feature>
<feature type="non-consecutive residues" evidence="2">
    <location>
        <begin position="860"/>
        <end position="861"/>
    </location>
</feature>
<feature type="non-consecutive residues" evidence="2">
    <location>
        <begin position="869"/>
        <end position="870"/>
    </location>
</feature>
<feature type="non-terminal residue" evidence="2">
    <location>
        <position position="1"/>
    </location>
</feature>
<feature type="non-terminal residue" evidence="2">
    <location>
        <position position="883"/>
    </location>
</feature>